<name>EFTS_RICAH</name>
<feature type="chain" id="PRO_1000006165" description="Elongation factor Ts">
    <location>
        <begin position="1"/>
        <end position="309"/>
    </location>
</feature>
<feature type="region of interest" description="Involved in Mg(2+) ion dislocation from EF-Tu" evidence="1">
    <location>
        <begin position="82"/>
        <end position="85"/>
    </location>
</feature>
<keyword id="KW-0963">Cytoplasm</keyword>
<keyword id="KW-0251">Elongation factor</keyword>
<keyword id="KW-0648">Protein biosynthesis</keyword>
<reference key="1">
    <citation type="submission" date="2007-09" db="EMBL/GenBank/DDBJ databases">
        <title>Complete genome sequence of Rickettsia akari.</title>
        <authorList>
            <person name="Madan A."/>
            <person name="Fahey J."/>
            <person name="Helton E."/>
            <person name="Ketteman M."/>
            <person name="Madan A."/>
            <person name="Rodrigues S."/>
            <person name="Sanchez A."/>
            <person name="Whiting M."/>
            <person name="Dasch G."/>
            <person name="Eremeeva M."/>
        </authorList>
    </citation>
    <scope>NUCLEOTIDE SEQUENCE [LARGE SCALE GENOMIC DNA]</scope>
    <source>
        <strain>Hartford</strain>
    </source>
</reference>
<dbReference type="EMBL" id="CP000847">
    <property type="protein sequence ID" value="ABV74458.1"/>
    <property type="molecule type" value="Genomic_DNA"/>
</dbReference>
<dbReference type="RefSeq" id="WP_012013328.1">
    <property type="nucleotide sequence ID" value="NC_009881.1"/>
</dbReference>
<dbReference type="SMR" id="A8GM33"/>
<dbReference type="STRING" id="293614.A1C_00625"/>
<dbReference type="KEGG" id="rak:A1C_00625"/>
<dbReference type="eggNOG" id="COG0264">
    <property type="taxonomic scope" value="Bacteria"/>
</dbReference>
<dbReference type="HOGENOM" id="CLU_047155_2_0_5"/>
<dbReference type="Proteomes" id="UP000006830">
    <property type="component" value="Chromosome"/>
</dbReference>
<dbReference type="GO" id="GO:0005737">
    <property type="term" value="C:cytoplasm"/>
    <property type="evidence" value="ECO:0007669"/>
    <property type="project" value="UniProtKB-SubCell"/>
</dbReference>
<dbReference type="GO" id="GO:0003746">
    <property type="term" value="F:translation elongation factor activity"/>
    <property type="evidence" value="ECO:0007669"/>
    <property type="project" value="UniProtKB-UniRule"/>
</dbReference>
<dbReference type="CDD" id="cd14275">
    <property type="entry name" value="UBA_EF-Ts"/>
    <property type="match status" value="1"/>
</dbReference>
<dbReference type="FunFam" id="1.10.286.20:FF:000001">
    <property type="entry name" value="Elongation factor Ts"/>
    <property type="match status" value="1"/>
</dbReference>
<dbReference type="FunFam" id="1.10.8.10:FF:000001">
    <property type="entry name" value="Elongation factor Ts"/>
    <property type="match status" value="1"/>
</dbReference>
<dbReference type="Gene3D" id="1.10.286.20">
    <property type="match status" value="1"/>
</dbReference>
<dbReference type="Gene3D" id="1.10.8.10">
    <property type="entry name" value="DNA helicase RuvA subunit, C-terminal domain"/>
    <property type="match status" value="1"/>
</dbReference>
<dbReference type="Gene3D" id="3.30.479.20">
    <property type="entry name" value="Elongation factor Ts, dimerisation domain"/>
    <property type="match status" value="2"/>
</dbReference>
<dbReference type="HAMAP" id="MF_00050">
    <property type="entry name" value="EF_Ts"/>
    <property type="match status" value="1"/>
</dbReference>
<dbReference type="InterPro" id="IPR036402">
    <property type="entry name" value="EF-Ts_dimer_sf"/>
</dbReference>
<dbReference type="InterPro" id="IPR001816">
    <property type="entry name" value="Transl_elong_EFTs/EF1B"/>
</dbReference>
<dbReference type="InterPro" id="IPR014039">
    <property type="entry name" value="Transl_elong_EFTs/EF1B_dimer"/>
</dbReference>
<dbReference type="InterPro" id="IPR018101">
    <property type="entry name" value="Transl_elong_Ts_CS"/>
</dbReference>
<dbReference type="InterPro" id="IPR009060">
    <property type="entry name" value="UBA-like_sf"/>
</dbReference>
<dbReference type="NCBIfam" id="TIGR00116">
    <property type="entry name" value="tsf"/>
    <property type="match status" value="1"/>
</dbReference>
<dbReference type="PANTHER" id="PTHR11741">
    <property type="entry name" value="ELONGATION FACTOR TS"/>
    <property type="match status" value="1"/>
</dbReference>
<dbReference type="PANTHER" id="PTHR11741:SF0">
    <property type="entry name" value="ELONGATION FACTOR TS, MITOCHONDRIAL"/>
    <property type="match status" value="1"/>
</dbReference>
<dbReference type="Pfam" id="PF00889">
    <property type="entry name" value="EF_TS"/>
    <property type="match status" value="1"/>
</dbReference>
<dbReference type="SUPFAM" id="SSF54713">
    <property type="entry name" value="Elongation factor Ts (EF-Ts), dimerisation domain"/>
    <property type="match status" value="1"/>
</dbReference>
<dbReference type="SUPFAM" id="SSF46934">
    <property type="entry name" value="UBA-like"/>
    <property type="match status" value="1"/>
</dbReference>
<dbReference type="PROSITE" id="PS01126">
    <property type="entry name" value="EF_TS_1"/>
    <property type="match status" value="1"/>
</dbReference>
<dbReference type="PROSITE" id="PS01127">
    <property type="entry name" value="EF_TS_2"/>
    <property type="match status" value="1"/>
</dbReference>
<gene>
    <name evidence="1" type="primary">tsf</name>
    <name type="ordered locus">A1C_00625</name>
</gene>
<protein>
    <recommendedName>
        <fullName evidence="1">Elongation factor Ts</fullName>
        <shortName evidence="1">EF-Ts</shortName>
    </recommendedName>
</protein>
<comment type="function">
    <text evidence="1">Associates with the EF-Tu.GDP complex and induces the exchange of GDP to GTP. It remains bound to the aminoacyl-tRNA.EF-Tu.GTP complex up to the GTP hydrolysis stage on the ribosome.</text>
</comment>
<comment type="subcellular location">
    <subcellularLocation>
        <location evidence="1">Cytoplasm</location>
    </subcellularLocation>
</comment>
<comment type="similarity">
    <text evidence="1">Belongs to the EF-Ts family.</text>
</comment>
<proteinExistence type="inferred from homology"/>
<evidence type="ECO:0000255" key="1">
    <source>
        <dbReference type="HAMAP-Rule" id="MF_00050"/>
    </source>
</evidence>
<sequence>MSEINISAAAVKELREKTGAGMMDCKKALIETSGNFEEAIDFLRKKGLAVAAKKAGRIAAEGLTAVKVDGLTGVVVEVNSETDFVARNARFQDLAKDIANLAVIAKNIDTLKTSKMQSGKSVEEEIIANIATIGENLALRRMDILEISEGAIGSYVHNEVVPNLGKISVLVGLVSNAKDKAKLEALAKQIAVHVAGNNPQSIDDSSLDQALVERERKVFFEKSKEEGKPDNIIEKMVEGRIRKFFSEVVLLQQNFLFDPKLTVAEVIKNAEQELGAEIKIAKFIRYELGEGIEHEEKNFVDEVAAITRS</sequence>
<accession>A8GM33</accession>
<organism>
    <name type="scientific">Rickettsia akari (strain Hartford)</name>
    <dbReference type="NCBI Taxonomy" id="293614"/>
    <lineage>
        <taxon>Bacteria</taxon>
        <taxon>Pseudomonadati</taxon>
        <taxon>Pseudomonadota</taxon>
        <taxon>Alphaproteobacteria</taxon>
        <taxon>Rickettsiales</taxon>
        <taxon>Rickettsiaceae</taxon>
        <taxon>Rickettsieae</taxon>
        <taxon>Rickettsia</taxon>
        <taxon>spotted fever group</taxon>
    </lineage>
</organism>